<comment type="function">
    <text evidence="1">Involved in iron-sulfur (Fe-S) cluster assembly. May act as a regulator of Fe-S biogenesis.</text>
</comment>
<comment type="similarity">
    <text evidence="1">Belongs to the frataxin family.</text>
</comment>
<proteinExistence type="inferred from homology"/>
<dbReference type="EMBL" id="AE016795">
    <property type="protein sequence ID" value="AAO09600.1"/>
    <property type="molecule type" value="Genomic_DNA"/>
</dbReference>
<dbReference type="RefSeq" id="WP_011079140.1">
    <property type="nucleotide sequence ID" value="NC_004459.3"/>
</dbReference>
<dbReference type="SMR" id="Q8DD83"/>
<dbReference type="GeneID" id="93895403"/>
<dbReference type="KEGG" id="vvu:VV1_1124"/>
<dbReference type="HOGENOM" id="CLU_080880_3_0_6"/>
<dbReference type="Proteomes" id="UP000002275">
    <property type="component" value="Chromosome 1"/>
</dbReference>
<dbReference type="GO" id="GO:0005829">
    <property type="term" value="C:cytosol"/>
    <property type="evidence" value="ECO:0007669"/>
    <property type="project" value="TreeGrafter"/>
</dbReference>
<dbReference type="GO" id="GO:0008199">
    <property type="term" value="F:ferric iron binding"/>
    <property type="evidence" value="ECO:0007669"/>
    <property type="project" value="InterPro"/>
</dbReference>
<dbReference type="GO" id="GO:0008198">
    <property type="term" value="F:ferrous iron binding"/>
    <property type="evidence" value="ECO:0007669"/>
    <property type="project" value="TreeGrafter"/>
</dbReference>
<dbReference type="GO" id="GO:0016226">
    <property type="term" value="P:iron-sulfur cluster assembly"/>
    <property type="evidence" value="ECO:0007669"/>
    <property type="project" value="UniProtKB-UniRule"/>
</dbReference>
<dbReference type="CDD" id="cd00503">
    <property type="entry name" value="Frataxin"/>
    <property type="match status" value="1"/>
</dbReference>
<dbReference type="Gene3D" id="3.30.920.10">
    <property type="entry name" value="Frataxin/CyaY"/>
    <property type="match status" value="1"/>
</dbReference>
<dbReference type="HAMAP" id="MF_00142">
    <property type="entry name" value="CyaY"/>
    <property type="match status" value="1"/>
</dbReference>
<dbReference type="InterPro" id="IPR047584">
    <property type="entry name" value="CyaY"/>
</dbReference>
<dbReference type="InterPro" id="IPR002908">
    <property type="entry name" value="Frataxin/CyaY"/>
</dbReference>
<dbReference type="InterPro" id="IPR036524">
    <property type="entry name" value="Frataxin/CyaY_sf"/>
</dbReference>
<dbReference type="InterPro" id="IPR020895">
    <property type="entry name" value="Frataxin_CS"/>
</dbReference>
<dbReference type="NCBIfam" id="TIGR03421">
    <property type="entry name" value="FeS_CyaY"/>
    <property type="match status" value="1"/>
</dbReference>
<dbReference type="PANTHER" id="PTHR16821">
    <property type="entry name" value="FRATAXIN"/>
    <property type="match status" value="1"/>
</dbReference>
<dbReference type="PANTHER" id="PTHR16821:SF2">
    <property type="entry name" value="FRATAXIN, MITOCHONDRIAL"/>
    <property type="match status" value="1"/>
</dbReference>
<dbReference type="Pfam" id="PF01491">
    <property type="entry name" value="Frataxin_Cyay"/>
    <property type="match status" value="1"/>
</dbReference>
<dbReference type="SMART" id="SM01219">
    <property type="entry name" value="Frataxin_Cyay"/>
    <property type="match status" value="1"/>
</dbReference>
<dbReference type="SUPFAM" id="SSF55387">
    <property type="entry name" value="Frataxin/Nqo15-like"/>
    <property type="match status" value="1"/>
</dbReference>
<dbReference type="PROSITE" id="PS01344">
    <property type="entry name" value="FRATAXIN_1"/>
    <property type="match status" value="1"/>
</dbReference>
<dbReference type="PROSITE" id="PS50810">
    <property type="entry name" value="FRATAXIN_2"/>
    <property type="match status" value="1"/>
</dbReference>
<gene>
    <name evidence="1" type="primary">cyaY</name>
    <name type="ordered locus">VV1_1124</name>
</gene>
<name>CYAY_VIBVU</name>
<keyword id="KW-0408">Iron</keyword>
<keyword id="KW-0479">Metal-binding</keyword>
<accession>Q8DD83</accession>
<reference key="1">
    <citation type="submission" date="2002-12" db="EMBL/GenBank/DDBJ databases">
        <title>Complete genome sequence of Vibrio vulnificus CMCP6.</title>
        <authorList>
            <person name="Rhee J.H."/>
            <person name="Kim S.Y."/>
            <person name="Chung S.S."/>
            <person name="Kim J.J."/>
            <person name="Moon Y.H."/>
            <person name="Jeong H."/>
            <person name="Choy H.E."/>
        </authorList>
    </citation>
    <scope>NUCLEOTIDE SEQUENCE [LARGE SCALE GENOMIC DNA]</scope>
    <source>
        <strain>CMCP6</strain>
    </source>
</reference>
<organism>
    <name type="scientific">Vibrio vulnificus (strain CMCP6)</name>
    <dbReference type="NCBI Taxonomy" id="216895"/>
    <lineage>
        <taxon>Bacteria</taxon>
        <taxon>Pseudomonadati</taxon>
        <taxon>Pseudomonadota</taxon>
        <taxon>Gammaproteobacteria</taxon>
        <taxon>Vibrionales</taxon>
        <taxon>Vibrionaceae</taxon>
        <taxon>Vibrio</taxon>
    </lineage>
</organism>
<evidence type="ECO:0000255" key="1">
    <source>
        <dbReference type="HAMAP-Rule" id="MF_00142"/>
    </source>
</evidence>
<feature type="chain" id="PRO_0000193967" description="Iron-sulfur cluster assembly protein CyaY">
    <location>
        <begin position="1"/>
        <end position="104"/>
    </location>
</feature>
<protein>
    <recommendedName>
        <fullName evidence="1">Iron-sulfur cluster assembly protein CyaY</fullName>
    </recommendedName>
</protein>
<sequence length="104" mass="11954">MNNTEFHQLVDNELQLIEEAIDESGADIDYETTGNVMTLEFDDRSQIIINRQEPMQEIWLASKSGGFHFQYKAGQWICSKTGVEFAHMVKQECEKHAGESIDWA</sequence>